<gene>
    <name evidence="1" type="primary">metXS</name>
    <name type="ordered locus">BURPS1106A_0192</name>
</gene>
<name>METXS_BURP0</name>
<comment type="function">
    <text evidence="1">Transfers a succinyl group from succinyl-CoA to L-homoserine, forming succinyl-L-homoserine.</text>
</comment>
<comment type="catalytic activity">
    <reaction evidence="1">
        <text>L-homoserine + succinyl-CoA = O-succinyl-L-homoserine + CoA</text>
        <dbReference type="Rhea" id="RHEA:22008"/>
        <dbReference type="ChEBI" id="CHEBI:57287"/>
        <dbReference type="ChEBI" id="CHEBI:57292"/>
        <dbReference type="ChEBI" id="CHEBI:57476"/>
        <dbReference type="ChEBI" id="CHEBI:57661"/>
        <dbReference type="EC" id="2.3.1.46"/>
    </reaction>
</comment>
<comment type="pathway">
    <text evidence="1">Amino-acid biosynthesis; L-methionine biosynthesis via de novo pathway; O-succinyl-L-homoserine from L-homoserine: step 1/1.</text>
</comment>
<comment type="subunit">
    <text evidence="1">Homodimer.</text>
</comment>
<comment type="subcellular location">
    <subcellularLocation>
        <location evidence="1">Cytoplasm</location>
    </subcellularLocation>
</comment>
<comment type="similarity">
    <text evidence="1">Belongs to the AB hydrolase superfamily. MetX family.</text>
</comment>
<accession>A3NQ54</accession>
<feature type="chain" id="PRO_1000021873" description="Homoserine O-succinyltransferase">
    <location>
        <begin position="1"/>
        <end position="381"/>
    </location>
</feature>
<feature type="domain" description="AB hydrolase-1" evidence="1">
    <location>
        <begin position="45"/>
        <end position="360"/>
    </location>
</feature>
<feature type="active site" description="Nucleophile" evidence="1">
    <location>
        <position position="151"/>
    </location>
</feature>
<feature type="active site" evidence="1">
    <location>
        <position position="321"/>
    </location>
</feature>
<feature type="active site" evidence="1">
    <location>
        <position position="354"/>
    </location>
</feature>
<feature type="binding site" evidence="1">
    <location>
        <position position="221"/>
    </location>
    <ligand>
        <name>substrate</name>
    </ligand>
</feature>
<feature type="binding site" evidence="1">
    <location>
        <position position="355"/>
    </location>
    <ligand>
        <name>substrate</name>
    </ligand>
</feature>
<feature type="site" description="Important for acyl-CoA specificity" evidence="1">
    <location>
        <position position="323"/>
    </location>
</feature>
<evidence type="ECO:0000255" key="1">
    <source>
        <dbReference type="HAMAP-Rule" id="MF_00296"/>
    </source>
</evidence>
<keyword id="KW-0012">Acyltransferase</keyword>
<keyword id="KW-0028">Amino-acid biosynthesis</keyword>
<keyword id="KW-0963">Cytoplasm</keyword>
<keyword id="KW-0486">Methionine biosynthesis</keyword>
<keyword id="KW-0808">Transferase</keyword>
<reference key="1">
    <citation type="journal article" date="2010" name="Genome Biol. Evol.">
        <title>Continuing evolution of Burkholderia mallei through genome reduction and large-scale rearrangements.</title>
        <authorList>
            <person name="Losada L."/>
            <person name="Ronning C.M."/>
            <person name="DeShazer D."/>
            <person name="Woods D."/>
            <person name="Fedorova N."/>
            <person name="Kim H.S."/>
            <person name="Shabalina S.A."/>
            <person name="Pearson T.R."/>
            <person name="Brinkac L."/>
            <person name="Tan P."/>
            <person name="Nandi T."/>
            <person name="Crabtree J."/>
            <person name="Badger J."/>
            <person name="Beckstrom-Sternberg S."/>
            <person name="Saqib M."/>
            <person name="Schutzer S.E."/>
            <person name="Keim P."/>
            <person name="Nierman W.C."/>
        </authorList>
    </citation>
    <scope>NUCLEOTIDE SEQUENCE [LARGE SCALE GENOMIC DNA]</scope>
    <source>
        <strain>1106a</strain>
    </source>
</reference>
<protein>
    <recommendedName>
        <fullName evidence="1">Homoserine O-succinyltransferase</fullName>
        <shortName evidence="1">HST</shortName>
        <ecNumber evidence="1">2.3.1.46</ecNumber>
    </recommendedName>
    <alternativeName>
        <fullName evidence="1">Homoserine transsuccinylase</fullName>
        <shortName evidence="1">HTS</shortName>
    </alternativeName>
</protein>
<organism>
    <name type="scientific">Burkholderia pseudomallei (strain 1106a)</name>
    <dbReference type="NCBI Taxonomy" id="357348"/>
    <lineage>
        <taxon>Bacteria</taxon>
        <taxon>Pseudomonadati</taxon>
        <taxon>Pseudomonadota</taxon>
        <taxon>Betaproteobacteria</taxon>
        <taxon>Burkholderiales</taxon>
        <taxon>Burkholderiaceae</taxon>
        <taxon>Burkholderia</taxon>
        <taxon>pseudomallei group</taxon>
    </lineage>
</organism>
<sequence length="381" mass="42018">MESIGVVAPHTMHFAEPLRLQSGSVLGNYQLVVETYGELNAARSNAVLVCHALNASHHVAGVYADDPRSTGWWDNMVGPGKPLDTNRFFVIGVNNLGSCFGSTGPMSIDPATGTPYGARFPVVTVEDWVHAQARVADAFGIERFAAVMGGSLGGMQALAWSLLYPERVAHCIDIASTPKLSAQNIAFNEVARSAILSDPDFHGGDYYAHGVKPRRGLRVARMIGHITYLSDDDMAEKFGRALRRADGALDAYNFNFDVEFEVESYLRYQGDKFADYFDANTYLLITRALDYFDPAKAFNGDLSAALAHTKAKYLIASFMTDWRFAPARSREIVKALLDNRRSVSYAEIDAPHGHDAFLLDDARYHNLVRAYYERIAEEVGA</sequence>
<dbReference type="EC" id="2.3.1.46" evidence="1"/>
<dbReference type="EMBL" id="CP000572">
    <property type="protein sequence ID" value="ABN90309.1"/>
    <property type="molecule type" value="Genomic_DNA"/>
</dbReference>
<dbReference type="SMR" id="A3NQ54"/>
<dbReference type="ESTHER" id="burma-metx">
    <property type="family name" value="Homoserine_transacetylase"/>
</dbReference>
<dbReference type="KEGG" id="bpl:BURPS1106A_0192"/>
<dbReference type="HOGENOM" id="CLU_028760_1_2_4"/>
<dbReference type="UniPathway" id="UPA00051">
    <property type="reaction ID" value="UER00075"/>
</dbReference>
<dbReference type="Proteomes" id="UP000006738">
    <property type="component" value="Chromosome I"/>
</dbReference>
<dbReference type="GO" id="GO:0005737">
    <property type="term" value="C:cytoplasm"/>
    <property type="evidence" value="ECO:0007669"/>
    <property type="project" value="UniProtKB-SubCell"/>
</dbReference>
<dbReference type="GO" id="GO:0004414">
    <property type="term" value="F:homoserine O-acetyltransferase activity"/>
    <property type="evidence" value="ECO:0007669"/>
    <property type="project" value="TreeGrafter"/>
</dbReference>
<dbReference type="GO" id="GO:0008899">
    <property type="term" value="F:homoserine O-succinyltransferase activity"/>
    <property type="evidence" value="ECO:0007669"/>
    <property type="project" value="UniProtKB-UniRule"/>
</dbReference>
<dbReference type="GO" id="GO:0009092">
    <property type="term" value="P:homoserine metabolic process"/>
    <property type="evidence" value="ECO:0007669"/>
    <property type="project" value="TreeGrafter"/>
</dbReference>
<dbReference type="GO" id="GO:0009086">
    <property type="term" value="P:methionine biosynthetic process"/>
    <property type="evidence" value="ECO:0007669"/>
    <property type="project" value="UniProtKB-UniRule"/>
</dbReference>
<dbReference type="FunFam" id="1.10.1740.110:FF:000001">
    <property type="entry name" value="Homoserine O-acetyltransferase"/>
    <property type="match status" value="1"/>
</dbReference>
<dbReference type="Gene3D" id="1.10.1740.110">
    <property type="match status" value="1"/>
</dbReference>
<dbReference type="Gene3D" id="3.40.50.1820">
    <property type="entry name" value="alpha/beta hydrolase"/>
    <property type="match status" value="1"/>
</dbReference>
<dbReference type="HAMAP" id="MF_00296">
    <property type="entry name" value="MetX_acyltransf"/>
    <property type="match status" value="1"/>
</dbReference>
<dbReference type="InterPro" id="IPR000073">
    <property type="entry name" value="AB_hydrolase_1"/>
</dbReference>
<dbReference type="InterPro" id="IPR029058">
    <property type="entry name" value="AB_hydrolase_fold"/>
</dbReference>
<dbReference type="InterPro" id="IPR008220">
    <property type="entry name" value="HAT_MetX-like"/>
</dbReference>
<dbReference type="NCBIfam" id="TIGR01392">
    <property type="entry name" value="homoserO_Ac_trn"/>
    <property type="match status" value="1"/>
</dbReference>
<dbReference type="NCBIfam" id="NF001209">
    <property type="entry name" value="PRK00175.1"/>
    <property type="match status" value="1"/>
</dbReference>
<dbReference type="PANTHER" id="PTHR32268">
    <property type="entry name" value="HOMOSERINE O-ACETYLTRANSFERASE"/>
    <property type="match status" value="1"/>
</dbReference>
<dbReference type="PANTHER" id="PTHR32268:SF11">
    <property type="entry name" value="HOMOSERINE O-ACETYLTRANSFERASE"/>
    <property type="match status" value="1"/>
</dbReference>
<dbReference type="Pfam" id="PF00561">
    <property type="entry name" value="Abhydrolase_1"/>
    <property type="match status" value="1"/>
</dbReference>
<dbReference type="PIRSF" id="PIRSF000443">
    <property type="entry name" value="Homoser_Ac_trans"/>
    <property type="match status" value="1"/>
</dbReference>
<dbReference type="SUPFAM" id="SSF53474">
    <property type="entry name" value="alpha/beta-Hydrolases"/>
    <property type="match status" value="1"/>
</dbReference>
<proteinExistence type="inferred from homology"/>